<feature type="initiator methionine" description="Removed" evidence="23">
    <location>
        <position position="1"/>
    </location>
</feature>
<feature type="chain" id="PRO_0000121158" description="Ras-related protein Rab-11B">
    <location>
        <begin position="2"/>
        <end position="215"/>
    </location>
</feature>
<feature type="propeptide" id="PRO_0000370815" description="Removed in mature form" evidence="3">
    <location>
        <begin position="216"/>
        <end position="218"/>
    </location>
</feature>
<feature type="region of interest" description="Disordered" evidence="4">
    <location>
        <begin position="184"/>
        <end position="218"/>
    </location>
</feature>
<feature type="short sequence motif" description="Switch 1" evidence="27 30 31">
    <location>
        <begin position="36"/>
        <end position="47"/>
    </location>
</feature>
<feature type="short sequence motif" description="Switch 2" evidence="27 30 31">
    <location>
        <begin position="67"/>
        <end position="86"/>
    </location>
</feature>
<feature type="binding site" evidence="27 31">
    <location>
        <position position="20"/>
    </location>
    <ligand>
        <name>GTP</name>
        <dbReference type="ChEBI" id="CHEBI:37565"/>
    </ligand>
</feature>
<feature type="binding site" evidence="27 31">
    <location>
        <position position="21"/>
    </location>
    <ligand>
        <name>GTP</name>
        <dbReference type="ChEBI" id="CHEBI:37565"/>
    </ligand>
</feature>
<feature type="binding site" evidence="27 31">
    <location>
        <position position="23"/>
    </location>
    <ligand>
        <name>GTP</name>
        <dbReference type="ChEBI" id="CHEBI:37565"/>
    </ligand>
</feature>
<feature type="binding site" evidence="27 31">
    <location>
        <position position="24"/>
    </location>
    <ligand>
        <name>GTP</name>
        <dbReference type="ChEBI" id="CHEBI:37565"/>
    </ligand>
</feature>
<feature type="binding site" evidence="27 31">
    <location>
        <position position="25"/>
    </location>
    <ligand>
        <name>GTP</name>
        <dbReference type="ChEBI" id="CHEBI:37565"/>
    </ligand>
</feature>
<feature type="binding site" evidence="7 30 31">
    <location>
        <position position="25"/>
    </location>
    <ligand>
        <name>Mg(2+)</name>
        <dbReference type="ChEBI" id="CHEBI:18420"/>
    </ligand>
</feature>
<feature type="binding site" evidence="27 31">
    <location>
        <position position="26"/>
    </location>
    <ligand>
        <name>GTP</name>
        <dbReference type="ChEBI" id="CHEBI:37565"/>
    </ligand>
</feature>
<feature type="binding site" evidence="27 31">
    <location>
        <position position="37"/>
    </location>
    <ligand>
        <name>GTP</name>
        <dbReference type="ChEBI" id="CHEBI:37565"/>
    </ligand>
</feature>
<feature type="binding site" evidence="27 31">
    <location>
        <position position="38"/>
    </location>
    <ligand>
        <name>GTP</name>
        <dbReference type="ChEBI" id="CHEBI:37565"/>
    </ligand>
</feature>
<feature type="binding site" evidence="27 31">
    <location>
        <position position="40"/>
    </location>
    <ligand>
        <name>GTP</name>
        <dbReference type="ChEBI" id="CHEBI:37565"/>
    </ligand>
</feature>
<feature type="binding site" evidence="27 31">
    <location>
        <position position="42"/>
    </location>
    <ligand>
        <name>GTP</name>
        <dbReference type="ChEBI" id="CHEBI:37565"/>
    </ligand>
</feature>
<feature type="binding site" evidence="27 31">
    <location>
        <position position="43"/>
    </location>
    <ligand>
        <name>GTP</name>
        <dbReference type="ChEBI" id="CHEBI:37565"/>
    </ligand>
</feature>
<feature type="binding site" evidence="7 31">
    <location>
        <position position="43"/>
    </location>
    <ligand>
        <name>Mg(2+)</name>
        <dbReference type="ChEBI" id="CHEBI:18420"/>
    </ligand>
</feature>
<feature type="binding site" evidence="7 31">
    <location>
        <position position="66"/>
    </location>
    <ligand>
        <name>Mg(2+)</name>
        <dbReference type="ChEBI" id="CHEBI:18420"/>
    </ligand>
</feature>
<feature type="binding site" evidence="27 31">
    <location>
        <position position="69"/>
    </location>
    <ligand>
        <name>GTP</name>
        <dbReference type="ChEBI" id="CHEBI:37565"/>
    </ligand>
</feature>
<feature type="binding site" evidence="27 31">
    <location>
        <position position="124"/>
    </location>
    <ligand>
        <name>GTP</name>
        <dbReference type="ChEBI" id="CHEBI:37565"/>
    </ligand>
</feature>
<feature type="binding site" evidence="27 31">
    <location>
        <position position="125"/>
    </location>
    <ligand>
        <name>GTP</name>
        <dbReference type="ChEBI" id="CHEBI:37565"/>
    </ligand>
</feature>
<feature type="binding site" evidence="27 31">
    <location>
        <position position="127"/>
    </location>
    <ligand>
        <name>GTP</name>
        <dbReference type="ChEBI" id="CHEBI:37565"/>
    </ligand>
</feature>
<feature type="binding site" evidence="27 31">
    <location>
        <position position="155"/>
    </location>
    <ligand>
        <name>GTP</name>
        <dbReference type="ChEBI" id="CHEBI:37565"/>
    </ligand>
</feature>
<feature type="binding site" evidence="27 31">
    <location>
        <position position="156"/>
    </location>
    <ligand>
        <name>GTP</name>
        <dbReference type="ChEBI" id="CHEBI:37565"/>
    </ligand>
</feature>
<feature type="modified residue" description="N-acetylglycine" evidence="23">
    <location>
        <position position="2"/>
    </location>
</feature>
<feature type="modified residue" description="Citrulline" evidence="2">
    <location>
        <position position="4"/>
    </location>
</feature>
<feature type="modified residue" description="Cysteine methyl ester" evidence="3">
    <location>
        <position position="215"/>
    </location>
</feature>
<feature type="lipid moiety-binding region" description="S-geranylgeranyl cysteine" evidence="16">
    <location>
        <position position="214"/>
    </location>
</feature>
<feature type="lipid moiety-binding region" description="S-geranylgeranyl cysteine" evidence="16">
    <location>
        <position position="215"/>
    </location>
</feature>
<feature type="splice variant" id="VSP_055832" description="In isoform 2." evidence="24">
    <original>EIYRIVSQKQIADRAAHDESPGNNVVDISVPPTTDGQKPNKLQCCQNL</original>
    <variation>GGRGPDGCG</variation>
    <location>
        <begin position="171"/>
        <end position="218"/>
    </location>
</feature>
<feature type="sequence variant" id="VAR_080598" description="In NDAGSCW; dbSNP:rs1555690779." evidence="19">
    <original>V</original>
    <variation>M</variation>
    <location>
        <position position="22"/>
    </location>
</feature>
<feature type="sequence variant" id="VAR_080599" description="In NDAGSCW; dbSNP:rs1555690804." evidence="19">
    <original>A</original>
    <variation>T</variation>
    <location>
        <position position="68"/>
    </location>
</feature>
<feature type="mutagenesis site" description="Dominant negative mutant locked in the inactive GDP-bound form; alters apical recycling. Does not interact with ZFYV2E and KIF5A." evidence="9 12">
    <original>S</original>
    <variation>N</variation>
    <location>
        <position position="25"/>
    </location>
</feature>
<feature type="mutagenesis site" description="Constitutively active mutant locked in the active GTP-bound form; alters apical recycling." evidence="9">
    <original>Q</original>
    <variation>L</variation>
    <location>
        <position position="70"/>
    </location>
</feature>
<feature type="sequence conflict" description="In Ref. 1; CAA56176." evidence="26" ref="1">
    <original>A</original>
    <variation>R</variation>
    <location>
        <position position="75"/>
    </location>
</feature>
<feature type="sequence conflict" description="In Ref. 5; AAV38342." evidence="26" ref="5">
    <original>N</original>
    <variation>D</variation>
    <location>
        <position position="116"/>
    </location>
</feature>
<feature type="sequence conflict" description="In Ref. 6; CAG38733." evidence="26" ref="6">
    <original>S</original>
    <variation>A</variation>
    <location>
        <position position="154"/>
    </location>
</feature>
<feature type="sequence conflict" description="In Ref. 6; CAG46492." evidence="26" ref="6">
    <original>R</original>
    <variation>C</variation>
    <location>
        <position position="184"/>
    </location>
</feature>
<feature type="sequence conflict" description="In Ref. 2; ABQ59034." evidence="26" ref="2">
    <original>Q</original>
    <variation>R</variation>
    <location>
        <position position="216"/>
    </location>
</feature>
<feature type="strand" evidence="32">
    <location>
        <begin position="9"/>
        <end position="19"/>
    </location>
</feature>
<feature type="helix" evidence="32">
    <location>
        <begin position="24"/>
        <end position="33"/>
    </location>
</feature>
<feature type="strand" evidence="32">
    <location>
        <begin position="47"/>
        <end position="55"/>
    </location>
</feature>
<feature type="strand" evidence="32">
    <location>
        <begin position="58"/>
        <end position="66"/>
    </location>
</feature>
<feature type="helix" evidence="32">
    <location>
        <begin position="70"/>
        <end position="72"/>
    </location>
</feature>
<feature type="helix" evidence="33">
    <location>
        <begin position="74"/>
        <end position="76"/>
    </location>
</feature>
<feature type="helix" evidence="32">
    <location>
        <begin position="78"/>
        <end position="81"/>
    </location>
</feature>
<feature type="strand" evidence="32">
    <location>
        <begin position="85"/>
        <end position="92"/>
    </location>
</feature>
<feature type="helix" evidence="32">
    <location>
        <begin position="96"/>
        <end position="100"/>
    </location>
</feature>
<feature type="helix" evidence="32">
    <location>
        <begin position="102"/>
        <end position="112"/>
    </location>
</feature>
<feature type="strand" evidence="32">
    <location>
        <begin position="118"/>
        <end position="124"/>
    </location>
</feature>
<feature type="helix" evidence="32">
    <location>
        <begin position="129"/>
        <end position="131"/>
    </location>
</feature>
<feature type="helix" evidence="32">
    <location>
        <begin position="136"/>
        <end position="145"/>
    </location>
</feature>
<feature type="strand" evidence="32">
    <location>
        <begin position="149"/>
        <end position="152"/>
    </location>
</feature>
<feature type="turn" evidence="32">
    <location>
        <begin position="155"/>
        <end position="157"/>
    </location>
</feature>
<feature type="helix" evidence="32">
    <location>
        <begin position="161"/>
        <end position="177"/>
    </location>
</feature>
<keyword id="KW-0002">3D-structure</keyword>
<keyword id="KW-0007">Acetylation</keyword>
<keyword id="KW-0025">Alternative splicing</keyword>
<keyword id="KW-0164">Citrullination</keyword>
<keyword id="KW-0968">Cytoplasmic vesicle</keyword>
<keyword id="KW-0903">Direct protein sequencing</keyword>
<keyword id="KW-0225">Disease variant</keyword>
<keyword id="KW-0967">Endosome</keyword>
<keyword id="KW-0325">Glycoprotein</keyword>
<keyword id="KW-0342">GTP-binding</keyword>
<keyword id="KW-0378">Hydrolase</keyword>
<keyword id="KW-0991">Intellectual disability</keyword>
<keyword id="KW-0449">Lipoprotein</keyword>
<keyword id="KW-0472">Membrane</keyword>
<keyword id="KW-0488">Methylation</keyword>
<keyword id="KW-0547">Nucleotide-binding</keyword>
<keyword id="KW-0636">Prenylation</keyword>
<keyword id="KW-0653">Protein transport</keyword>
<keyword id="KW-1267">Proteomics identification</keyword>
<keyword id="KW-1185">Reference proteome</keyword>
<keyword id="KW-0770">Synapse</keyword>
<keyword id="KW-0813">Transport</keyword>
<reference key="1">
    <citation type="journal article" date="1994" name="Biochem. Biophys. Res. Commun.">
        <title>Molecular cloning of two small GTP-binding proteins from human skeletal muscle.</title>
        <authorList>
            <person name="Zhu A.X."/>
            <person name="Zhao Y."/>
            <person name="Flier J.S."/>
        </authorList>
    </citation>
    <scope>NUCLEOTIDE SEQUENCE [MRNA] (ISOFORM 1)</scope>
    <source>
        <tissue>Muscle</tissue>
    </source>
</reference>
<reference key="2">
    <citation type="submission" date="2007-04" db="EMBL/GenBank/DDBJ databases">
        <authorList>
            <person name="Schupp I."/>
        </authorList>
    </citation>
    <scope>NUCLEOTIDE SEQUENCE [MRNA] (ISOFORM 1)</scope>
    <source>
        <tissue>Brain</tissue>
    </source>
</reference>
<reference key="3">
    <citation type="submission" date="2002-04" db="EMBL/GenBank/DDBJ databases">
        <title>cDNA clones of human proteins involved in signal transduction sequenced by the Guthrie cDNA resource center (www.cdna.org).</title>
        <authorList>
            <person name="Puhl H.L. III"/>
            <person name="Ikeda S.R."/>
            <person name="Aronstam R.S."/>
        </authorList>
    </citation>
    <scope>NUCLEOTIDE SEQUENCE [LARGE SCALE MRNA] (ISOFORM 1)</scope>
    <source>
        <tissue>Brain</tissue>
    </source>
</reference>
<reference key="4">
    <citation type="journal article" date="2004" name="Nat. Genet.">
        <title>Complete sequencing and characterization of 21,243 full-length human cDNAs.</title>
        <authorList>
            <person name="Ota T."/>
            <person name="Suzuki Y."/>
            <person name="Nishikawa T."/>
            <person name="Otsuki T."/>
            <person name="Sugiyama T."/>
            <person name="Irie R."/>
            <person name="Wakamatsu A."/>
            <person name="Hayashi K."/>
            <person name="Sato H."/>
            <person name="Nagai K."/>
            <person name="Kimura K."/>
            <person name="Makita H."/>
            <person name="Sekine M."/>
            <person name="Obayashi M."/>
            <person name="Nishi T."/>
            <person name="Shibahara T."/>
            <person name="Tanaka T."/>
            <person name="Ishii S."/>
            <person name="Yamamoto J."/>
            <person name="Saito K."/>
            <person name="Kawai Y."/>
            <person name="Isono Y."/>
            <person name="Nakamura Y."/>
            <person name="Nagahari K."/>
            <person name="Murakami K."/>
            <person name="Yasuda T."/>
            <person name="Iwayanagi T."/>
            <person name="Wagatsuma M."/>
            <person name="Shiratori A."/>
            <person name="Sudo H."/>
            <person name="Hosoiri T."/>
            <person name="Kaku Y."/>
            <person name="Kodaira H."/>
            <person name="Kondo H."/>
            <person name="Sugawara M."/>
            <person name="Takahashi M."/>
            <person name="Kanda K."/>
            <person name="Yokoi T."/>
            <person name="Furuya T."/>
            <person name="Kikkawa E."/>
            <person name="Omura Y."/>
            <person name="Abe K."/>
            <person name="Kamihara K."/>
            <person name="Katsuta N."/>
            <person name="Sato K."/>
            <person name="Tanikawa M."/>
            <person name="Yamazaki M."/>
            <person name="Ninomiya K."/>
            <person name="Ishibashi T."/>
            <person name="Yamashita H."/>
            <person name="Murakawa K."/>
            <person name="Fujimori K."/>
            <person name="Tanai H."/>
            <person name="Kimata M."/>
            <person name="Watanabe M."/>
            <person name="Hiraoka S."/>
            <person name="Chiba Y."/>
            <person name="Ishida S."/>
            <person name="Ono Y."/>
            <person name="Takiguchi S."/>
            <person name="Watanabe S."/>
            <person name="Yosida M."/>
            <person name="Hotuta T."/>
            <person name="Kusano J."/>
            <person name="Kanehori K."/>
            <person name="Takahashi-Fujii A."/>
            <person name="Hara H."/>
            <person name="Tanase T.-O."/>
            <person name="Nomura Y."/>
            <person name="Togiya S."/>
            <person name="Komai F."/>
            <person name="Hara R."/>
            <person name="Takeuchi K."/>
            <person name="Arita M."/>
            <person name="Imose N."/>
            <person name="Musashino K."/>
            <person name="Yuuki H."/>
            <person name="Oshima A."/>
            <person name="Sasaki N."/>
            <person name="Aotsuka S."/>
            <person name="Yoshikawa Y."/>
            <person name="Matsunawa H."/>
            <person name="Ichihara T."/>
            <person name="Shiohata N."/>
            <person name="Sano S."/>
            <person name="Moriya S."/>
            <person name="Momiyama H."/>
            <person name="Satoh N."/>
            <person name="Takami S."/>
            <person name="Terashima Y."/>
            <person name="Suzuki O."/>
            <person name="Nakagawa S."/>
            <person name="Senoh A."/>
            <person name="Mizoguchi H."/>
            <person name="Goto Y."/>
            <person name="Shimizu F."/>
            <person name="Wakebe H."/>
            <person name="Hishigaki H."/>
            <person name="Watanabe T."/>
            <person name="Sugiyama A."/>
            <person name="Takemoto M."/>
            <person name="Kawakami B."/>
            <person name="Yamazaki M."/>
            <person name="Watanabe K."/>
            <person name="Kumagai A."/>
            <person name="Itakura S."/>
            <person name="Fukuzumi Y."/>
            <person name="Fujimori Y."/>
            <person name="Komiyama M."/>
            <person name="Tashiro H."/>
            <person name="Tanigami A."/>
            <person name="Fujiwara T."/>
            <person name="Ono T."/>
            <person name="Yamada K."/>
            <person name="Fujii Y."/>
            <person name="Ozaki K."/>
            <person name="Hirao M."/>
            <person name="Ohmori Y."/>
            <person name="Kawabata A."/>
            <person name="Hikiji T."/>
            <person name="Kobatake N."/>
            <person name="Inagaki H."/>
            <person name="Ikema Y."/>
            <person name="Okamoto S."/>
            <person name="Okitani R."/>
            <person name="Kawakami T."/>
            <person name="Noguchi S."/>
            <person name="Itoh T."/>
            <person name="Shigeta K."/>
            <person name="Senba T."/>
            <person name="Matsumura K."/>
            <person name="Nakajima Y."/>
            <person name="Mizuno T."/>
            <person name="Morinaga M."/>
            <person name="Sasaki M."/>
            <person name="Togashi T."/>
            <person name="Oyama M."/>
            <person name="Hata H."/>
            <person name="Watanabe M."/>
            <person name="Komatsu T."/>
            <person name="Mizushima-Sugano J."/>
            <person name="Satoh T."/>
            <person name="Shirai Y."/>
            <person name="Takahashi Y."/>
            <person name="Nakagawa K."/>
            <person name="Okumura K."/>
            <person name="Nagase T."/>
            <person name="Nomura N."/>
            <person name="Kikuchi H."/>
            <person name="Masuho Y."/>
            <person name="Yamashita R."/>
            <person name="Nakai K."/>
            <person name="Yada T."/>
            <person name="Nakamura Y."/>
            <person name="Ohara O."/>
            <person name="Isogai T."/>
            <person name="Sugano S."/>
        </authorList>
    </citation>
    <scope>NUCLEOTIDE SEQUENCE [LARGE SCALE MRNA] (ISOFORMS 1 AND 2)</scope>
    <source>
        <tissue>Brain</tissue>
        <tissue>Cerebellum</tissue>
    </source>
</reference>
<reference key="5">
    <citation type="submission" date="2003-05" db="EMBL/GenBank/DDBJ databases">
        <title>Cloning of human full-length CDSs in BD Creator(TM) system donor vector.</title>
        <authorList>
            <person name="Kalnine N."/>
            <person name="Chen X."/>
            <person name="Rolfs A."/>
            <person name="Halleck A."/>
            <person name="Hines L."/>
            <person name="Eisenstein S."/>
            <person name="Koundinya M."/>
            <person name="Raphael J."/>
            <person name="Moreira D."/>
            <person name="Kelley T."/>
            <person name="LaBaer J."/>
            <person name="Lin Y."/>
            <person name="Phelan M."/>
            <person name="Farmer A."/>
        </authorList>
    </citation>
    <scope>NUCLEOTIDE SEQUENCE [LARGE SCALE MRNA] (ISOFORM 1)</scope>
</reference>
<reference key="6">
    <citation type="submission" date="2004-06" db="EMBL/GenBank/DDBJ databases">
        <title>Cloning of human full open reading frames in Gateway(TM) system entry vector (pDONR201).</title>
        <authorList>
            <person name="Ebert L."/>
            <person name="Schick M."/>
            <person name="Neubert P."/>
            <person name="Schatten R."/>
            <person name="Henze S."/>
            <person name="Korn B."/>
        </authorList>
    </citation>
    <scope>NUCLEOTIDE SEQUENCE [LARGE SCALE MRNA] (ISOFORM 1)</scope>
</reference>
<reference key="7">
    <citation type="journal article" date="2004" name="Nature">
        <title>The DNA sequence and biology of human chromosome 19.</title>
        <authorList>
            <person name="Grimwood J."/>
            <person name="Gordon L.A."/>
            <person name="Olsen A.S."/>
            <person name="Terry A."/>
            <person name="Schmutz J."/>
            <person name="Lamerdin J.E."/>
            <person name="Hellsten U."/>
            <person name="Goodstein D."/>
            <person name="Couronne O."/>
            <person name="Tran-Gyamfi M."/>
            <person name="Aerts A."/>
            <person name="Altherr M."/>
            <person name="Ashworth L."/>
            <person name="Bajorek E."/>
            <person name="Black S."/>
            <person name="Branscomb E."/>
            <person name="Caenepeel S."/>
            <person name="Carrano A.V."/>
            <person name="Caoile C."/>
            <person name="Chan Y.M."/>
            <person name="Christensen M."/>
            <person name="Cleland C.A."/>
            <person name="Copeland A."/>
            <person name="Dalin E."/>
            <person name="Dehal P."/>
            <person name="Denys M."/>
            <person name="Detter J.C."/>
            <person name="Escobar J."/>
            <person name="Flowers D."/>
            <person name="Fotopulos D."/>
            <person name="Garcia C."/>
            <person name="Georgescu A.M."/>
            <person name="Glavina T."/>
            <person name="Gomez M."/>
            <person name="Gonzales E."/>
            <person name="Groza M."/>
            <person name="Hammon N."/>
            <person name="Hawkins T."/>
            <person name="Haydu L."/>
            <person name="Ho I."/>
            <person name="Huang W."/>
            <person name="Israni S."/>
            <person name="Jett J."/>
            <person name="Kadner K."/>
            <person name="Kimball H."/>
            <person name="Kobayashi A."/>
            <person name="Larionov V."/>
            <person name="Leem S.-H."/>
            <person name="Lopez F."/>
            <person name="Lou Y."/>
            <person name="Lowry S."/>
            <person name="Malfatti S."/>
            <person name="Martinez D."/>
            <person name="McCready P.M."/>
            <person name="Medina C."/>
            <person name="Morgan J."/>
            <person name="Nelson K."/>
            <person name="Nolan M."/>
            <person name="Ovcharenko I."/>
            <person name="Pitluck S."/>
            <person name="Pollard M."/>
            <person name="Popkie A.P."/>
            <person name="Predki P."/>
            <person name="Quan G."/>
            <person name="Ramirez L."/>
            <person name="Rash S."/>
            <person name="Retterer J."/>
            <person name="Rodriguez A."/>
            <person name="Rogers S."/>
            <person name="Salamov A."/>
            <person name="Salazar A."/>
            <person name="She X."/>
            <person name="Smith D."/>
            <person name="Slezak T."/>
            <person name="Solovyev V."/>
            <person name="Thayer N."/>
            <person name="Tice H."/>
            <person name="Tsai M."/>
            <person name="Ustaszewska A."/>
            <person name="Vo N."/>
            <person name="Wagner M."/>
            <person name="Wheeler J."/>
            <person name="Wu K."/>
            <person name="Xie G."/>
            <person name="Yang J."/>
            <person name="Dubchak I."/>
            <person name="Furey T.S."/>
            <person name="DeJong P."/>
            <person name="Dickson M."/>
            <person name="Gordon D."/>
            <person name="Eichler E.E."/>
            <person name="Pennacchio L.A."/>
            <person name="Richardson P."/>
            <person name="Stubbs L."/>
            <person name="Rokhsar D.S."/>
            <person name="Myers R.M."/>
            <person name="Rubin E.M."/>
            <person name="Lucas S.M."/>
        </authorList>
    </citation>
    <scope>NUCLEOTIDE SEQUENCE [LARGE SCALE GENOMIC DNA]</scope>
</reference>
<reference key="8">
    <citation type="submission" date="2005-09" db="EMBL/GenBank/DDBJ databases">
        <authorList>
            <person name="Mural R.J."/>
            <person name="Istrail S."/>
            <person name="Sutton G.G."/>
            <person name="Florea L."/>
            <person name="Halpern A.L."/>
            <person name="Mobarry C.M."/>
            <person name="Lippert R."/>
            <person name="Walenz B."/>
            <person name="Shatkay H."/>
            <person name="Dew I."/>
            <person name="Miller J.R."/>
            <person name="Flanigan M.J."/>
            <person name="Edwards N.J."/>
            <person name="Bolanos R."/>
            <person name="Fasulo D."/>
            <person name="Halldorsson B.V."/>
            <person name="Hannenhalli S."/>
            <person name="Turner R."/>
            <person name="Yooseph S."/>
            <person name="Lu F."/>
            <person name="Nusskern D.R."/>
            <person name="Shue B.C."/>
            <person name="Zheng X.H."/>
            <person name="Zhong F."/>
            <person name="Delcher A.L."/>
            <person name="Huson D.H."/>
            <person name="Kravitz S.A."/>
            <person name="Mouchard L."/>
            <person name="Reinert K."/>
            <person name="Remington K.A."/>
            <person name="Clark A.G."/>
            <person name="Waterman M.S."/>
            <person name="Eichler E.E."/>
            <person name="Adams M.D."/>
            <person name="Hunkapiller M.W."/>
            <person name="Myers E.W."/>
            <person name="Venter J.C."/>
        </authorList>
    </citation>
    <scope>NUCLEOTIDE SEQUENCE [LARGE SCALE GENOMIC DNA]</scope>
</reference>
<reference key="9">
    <citation type="journal article" date="2004" name="Genome Res.">
        <title>The status, quality, and expansion of the NIH full-length cDNA project: the Mammalian Gene Collection (MGC).</title>
        <authorList>
            <consortium name="The MGC Project Team"/>
        </authorList>
    </citation>
    <scope>NUCLEOTIDE SEQUENCE [LARGE SCALE MRNA] (ISOFORM 1)</scope>
</reference>
<reference key="10">
    <citation type="submission" date="2005-03" db="UniProtKB">
        <authorList>
            <person name="Bienvenut W.V."/>
        </authorList>
    </citation>
    <scope>PROTEIN SEQUENCE OF 2-13; 34-51; 62-72; 83-95; 111-125 AND 167-174</scope>
    <scope>CLEAVAGE OF INITIATOR METHIONINE</scope>
    <scope>ACETYLATION AT GLY-2</scope>
    <scope>IDENTIFICATION BY MASS SPECTROMETRY</scope>
    <source>
        <tissue>B-cell lymphoma</tissue>
    </source>
</reference>
<reference key="11">
    <citation type="journal article" date="2001" name="J. Biol. Chem.">
        <title>Identification and characterization of a family of Rab11-interacting proteins.</title>
        <authorList>
            <person name="Hales C.M."/>
            <person name="Griner R."/>
            <person name="Hobdy-Henderson K.C."/>
            <person name="Dorn M.C."/>
            <person name="Hardy D."/>
            <person name="Kumar R."/>
            <person name="Navarre J."/>
            <person name="Chan E.K.L."/>
            <person name="Lapierre L.A."/>
            <person name="Goldenring J.R."/>
        </authorList>
    </citation>
    <scope>INTERACTION WITH RAB11FIP1; RAB11FIP2; RAB11FIP3 AND RAB11FIP4</scope>
</reference>
<reference key="12">
    <citation type="journal article" date="2003" name="J. Neurosci.">
        <title>Divergent functions of neuronal Rab11b in Ca2+-regulated versus constitutive exocytosis.</title>
        <authorList>
            <person name="Khvotchev M.V."/>
            <person name="Ren M."/>
            <person name="Takamori S."/>
            <person name="Jahn R."/>
            <person name="Suedhof T.C."/>
        </authorList>
    </citation>
    <scope>FUNCTION IN EXOCYTOSIS</scope>
</reference>
<reference key="13">
    <citation type="journal article" date="2009" name="J. Biol. Chem.">
        <title>Small GTPase determinants for the Golgi processing and plasmalemmal expression of human ether-a-go-go related (hERG) K+ channels.</title>
        <authorList>
            <person name="Delisle B.P."/>
            <person name="Underkofler H.A."/>
            <person name="Moungey B.M."/>
            <person name="Slind J.K."/>
            <person name="Kilby J.A."/>
            <person name="Best J.M."/>
            <person name="Foell J.D."/>
            <person name="Balijepalli R.C."/>
            <person name="Kamp T.J."/>
            <person name="January C.T."/>
        </authorList>
    </citation>
    <scope>FUNCTION</scope>
</reference>
<reference key="14">
    <citation type="journal article" date="2009" name="Mol. Biol. Cell">
        <title>Rab11b regulates the apical recycling of the cystic fibrosis transmembrane conductance regulator in polarized intestinal epithelial cells.</title>
        <authorList>
            <person name="Silvis M.R."/>
            <person name="Bertrand C.A."/>
            <person name="Ameen N."/>
            <person name="Golin-Bisello F."/>
            <person name="Butterworth M.B."/>
            <person name="Frizzell R.A."/>
            <person name="Bradbury N.A."/>
        </authorList>
    </citation>
    <scope>FUNCTION IN APICAL RECYCLING</scope>
    <scope>MUTAGENESIS OF SER-25 AND GLN-70</scope>
</reference>
<reference key="15">
    <citation type="journal article" date="2011" name="Am. J. Physiol.">
        <title>Small GTPase Rab11b regulates degradation of surface membrane L-type Cav1.2 channels.</title>
        <authorList>
            <person name="Best J.M."/>
            <person name="Foell J.D."/>
            <person name="Buss C.R."/>
            <person name="Delisle B.P."/>
            <person name="Balijepalli R.C."/>
            <person name="January C.T."/>
            <person name="Kamp T.J."/>
        </authorList>
    </citation>
    <scope>FUNCTION</scope>
</reference>
<reference key="16">
    <citation type="journal article" date="2011" name="BMC Syst. Biol.">
        <title>Initial characterization of the human central proteome.</title>
        <authorList>
            <person name="Burkard T.R."/>
            <person name="Planyavsky M."/>
            <person name="Kaupe I."/>
            <person name="Breitwieser F.P."/>
            <person name="Buerckstuemmer T."/>
            <person name="Bennett K.L."/>
            <person name="Superti-Furga G."/>
            <person name="Colinge J."/>
        </authorList>
    </citation>
    <scope>IDENTIFICATION BY MASS SPECTROMETRY [LARGE SCALE ANALYSIS]</scope>
</reference>
<reference key="17">
    <citation type="journal article" date="2011" name="J. Cell. Physiol.">
        <title>Rab11b and its effector Rip11 regulate the acidosis-induced traffic of V-ATPase in salivary ducts.</title>
        <authorList>
            <person name="Oehlke O."/>
            <person name="Martin H.W."/>
            <person name="Osterberg N."/>
            <person name="Roussa E."/>
        </authorList>
    </citation>
    <scope>FUNCTION IN V-ATPASE TRANSPORT</scope>
    <scope>INTERACTION WITH ATP6V1E1</scope>
    <scope>INDUCTION</scope>
</reference>
<reference key="18">
    <citation type="journal article" date="2011" name="Mol. Biol. Cell">
        <title>Protrudin serves as an adaptor molecule that connects KIF5 and its cargoes in vesicular transport during process formation.</title>
        <authorList>
            <person name="Matsuzaki F."/>
            <person name="Shirane M."/>
            <person name="Matsumoto M."/>
            <person name="Nakayama K.I."/>
        </authorList>
    </citation>
    <scope>INTERACTION WITH ZFYVE27 AND KIF5A</scope>
    <scope>MUTAGENESIS OF GLN-70</scope>
</reference>
<reference key="19">
    <citation type="journal article" date="2011" name="Traffic">
        <title>Rab GTPases regulating phagosome maturation are differentially recruited to mycobacterial phagosomes.</title>
        <authorList>
            <person name="Seto S."/>
            <person name="Tsujimura K."/>
            <person name="Koide Y."/>
        </authorList>
    </citation>
    <scope>SUBCELLULAR LOCATION</scope>
</reference>
<reference key="20">
    <citation type="journal article" date="2012" name="Am. J. Physiol.">
        <title>Rab11b regulates the trafficking and recycling of the epithelial sodium channel (ENaC).</title>
        <authorList>
            <person name="Butterworth M.B."/>
            <person name="Edinger R.S."/>
            <person name="Silvis M.R."/>
            <person name="Gallo L.I."/>
            <person name="Liang X."/>
            <person name="Apodaca G."/>
            <person name="Frizzell R.A."/>
            <person name="Fizzell R.A."/>
            <person name="Johnson J.P."/>
        </authorList>
    </citation>
    <scope>FUNCTION</scope>
</reference>
<reference key="21">
    <citation type="journal article" date="2012" name="J. Cell Biol.">
        <title>TBC1D14 regulates autophagosome formation via Rab11- and ULK1-positive recycling endosomes.</title>
        <authorList>
            <person name="Longatti A."/>
            <person name="Lamb C.A."/>
            <person name="Razi M."/>
            <person name="Yoshimura S."/>
            <person name="Barr F.A."/>
            <person name="Tooze S.A."/>
        </authorList>
    </citation>
    <scope>INTERACTION WITH TBC1D14</scope>
</reference>
<reference key="22">
    <citation type="journal article" date="2013" name="MBio">
        <title>ACBD3 interaction with TBC1 domain 22 protein is differentially affected by enteroviral and kobuviral 3A protein binding.</title>
        <authorList>
            <person name="Greninger A.L."/>
            <person name="Knudsen G.M."/>
            <person name="Betegon M."/>
            <person name="Burlingame A.L."/>
            <person name="DeRisi J.L."/>
        </authorList>
    </citation>
    <scope>INTERACTION WITH PI4KB</scope>
</reference>
<reference key="23">
    <citation type="journal article" date="2013" name="Mol. Cell. Proteomics">
        <title>Large-scale top down proteomics of the human proteome: membrane proteins, mitochondria, and senescence.</title>
        <authorList>
            <person name="Catherman A.D."/>
            <person name="Durbin K.R."/>
            <person name="Ahlf D.R."/>
            <person name="Early B.P."/>
            <person name="Fellers R.T."/>
            <person name="Tran J.C."/>
            <person name="Thomas P.M."/>
            <person name="Kelleher N.L."/>
        </authorList>
    </citation>
    <scope>ISOPRENYLATION AT CYS-214 AND CYS-215</scope>
    <scope>IDENTIFICATION BY MASS SPECTROMETRY</scope>
</reference>
<reference key="24">
    <citation type="journal article" date="2015" name="J. Biol. Chem.">
        <title>Structure-Function Analyses of the Interactions between Rab11 and Rab14 Small GTPases with Their Shared Effector Rab Coupling Protein (RCP).</title>
        <authorList>
            <person name="Lall P."/>
            <person name="Lindsay A.J."/>
            <person name="Hanscom S."/>
            <person name="Kecman T."/>
            <person name="Taglauer E.S."/>
            <person name="McVeigh U.M."/>
            <person name="Franklin E."/>
            <person name="McCaffrey M.W."/>
            <person name="Khan A.R."/>
        </authorList>
    </citation>
    <scope>FUNCTION</scope>
    <scope>SUBCELLULAR LOCATION</scope>
</reference>
<reference key="25">
    <citation type="journal article" date="2015" name="J. Cell Sci.">
        <title>The Arf and Rab11 effector FIP3 acts synergistically with ASAP1 to direct Rabin8 in ciliary receptor targeting.</title>
        <authorList>
            <person name="Wang J."/>
            <person name="Deretic D."/>
        </authorList>
    </citation>
    <scope>FUNCTION</scope>
    <scope>INTERACTION WITH RAB11FIP3; ARF4; ASAP1; RAB3IP AND RHO</scope>
</reference>
<reference key="26">
    <citation type="journal article" date="2015" name="Proteomics">
        <title>N-terminome analysis of the human mitochondrial proteome.</title>
        <authorList>
            <person name="Vaca Jacome A.S."/>
            <person name="Rabilloud T."/>
            <person name="Schaeffer-Reiss C."/>
            <person name="Rompais M."/>
            <person name="Ayoub D."/>
            <person name="Lane L."/>
            <person name="Bairoch A."/>
            <person name="Van Dorsselaer A."/>
            <person name="Carapito C."/>
        </authorList>
    </citation>
    <scope>IDENTIFICATION BY MASS SPECTROMETRY [LARGE SCALE ANALYSIS]</scope>
</reference>
<reference key="27">
    <citation type="journal article" date="2017" name="Am. J. Hum. Genet.">
        <title>Recurrent de novo mutations disturbing the GTP/GDP binding pocket of RAB11B cause intellectual disability and a distinctive brain phenotype.</title>
        <authorList>
            <consortium name="DDD Study"/>
            <person name="Lamers I.J.C."/>
            <person name="Reijnders M.R.F."/>
            <person name="Venselaar H."/>
            <person name="Kraus A."/>
            <person name="Jansen S."/>
            <person name="de Vries B.B.A."/>
            <person name="Houge G."/>
            <person name="Gradek G.A."/>
            <person name="Seo J."/>
            <person name="Choi M."/>
            <person name="Chae J.H."/>
            <person name="van der Burgt I."/>
            <person name="Pfundt R."/>
            <person name="Letteboer S.J.F."/>
            <person name="van Beersum S.E.C."/>
            <person name="Dusseljee S."/>
            <person name="Brunner H.G."/>
            <person name="Doherty D."/>
            <person name="Kleefstra T."/>
            <person name="Roepman R."/>
        </authorList>
    </citation>
    <scope>INVOLVEMENT IN NDAGSCW</scope>
    <scope>VARIANTS NDAGSCW MET-22 AND THR-68</scope>
</reference>
<reference key="28">
    <citation type="journal article" date="2019" name="Am. J. Hum. Genet.">
        <title>TBC1D8B Loss-of-Function Mutations Lead to X-Linked Nephrotic Syndrome via Defective Trafficking Pathways.</title>
        <authorList>
            <person name="Dorval G."/>
            <person name="Kuzmuk V."/>
            <person name="Gribouval O."/>
            <person name="Welsh G.I."/>
            <person name="Bierzynska A."/>
            <person name="Schmitt A."/>
            <person name="Miserey-Lenkei S."/>
            <person name="Koziell A."/>
            <person name="Haq S."/>
            <person name="Benmerah A."/>
            <person name="Mollet G."/>
            <person name="Boyer O."/>
            <person name="Saleem M.A."/>
            <person name="Antignac C."/>
        </authorList>
    </citation>
    <scope>INTERACTION WITH TBC1D8B</scope>
</reference>
<reference key="29">
    <citation type="journal article" date="2019" name="Dev. Cell">
        <title>Akt Regulates a Rab11-Effector Switch Required for Ciliogenesis.</title>
        <authorList>
            <person name="Walia V."/>
            <person name="Cuenca A."/>
            <person name="Vetter M."/>
            <person name="Insinna C."/>
            <person name="Perera S."/>
            <person name="Lu Q."/>
            <person name="Ritt D.A."/>
            <person name="Semler E."/>
            <person name="Specht S."/>
            <person name="Stauffer J."/>
            <person name="Morrison D.K."/>
            <person name="Lorentzen E."/>
            <person name="Westlake C.J."/>
        </authorList>
    </citation>
    <scope>FUNCTION</scope>
    <scope>INTERACTION WITH WDR44</scope>
</reference>
<reference key="30">
    <citation type="journal article" date="2020" name="Front. Cell. Infect. Microbiol.">
        <title>The Salmonella effector SseK3 targets small Rab GTPases.</title>
        <authorList>
            <person name="Gan J."/>
            <person name="Scott N.E."/>
            <person name="Newson J.P.M."/>
            <person name="Wibawa R.R."/>
            <person name="Wong Fok Lung T."/>
            <person name="Pollock G.L."/>
            <person name="Ng G.Z."/>
            <person name="van Driel I."/>
            <person name="Pearson J.S."/>
            <person name="Hartland E.L."/>
            <person name="Giogha C."/>
        </authorList>
    </citation>
    <scope>GLYCOSYLATION (MICROBIAL INFECTION)</scope>
</reference>
<reference evidence="30 31" key="31">
    <citation type="journal article" date="2006" name="J. Struct. Biol.">
        <title>The crystal structure of the small GTPase Rab11b reveals critical differences relative to the Rab11a isoform.</title>
        <authorList>
            <person name="Scapin S.M."/>
            <person name="Carneiro F.R."/>
            <person name="Alves A.C."/>
            <person name="Medrano F.J."/>
            <person name="Guimaraes B.G."/>
            <person name="Zanchin N.I."/>
        </authorList>
    </citation>
    <scope>X-RAY CRYSTALLOGRAPHY (1.55 ANGSTROMS) OF 8-205 IN COMPLEX WITH GTP ANALOG; GDP AND MG(2+)</scope>
    <scope>GTP-BINDING</scope>
    <scope>CATALYTIC ACTIVITY</scope>
    <scope>COFACTOR</scope>
    <scope>DOMAIN</scope>
</reference>
<gene>
    <name evidence="29" type="primary">RAB11B</name>
    <name type="synonym">YPT3</name>
</gene>
<comment type="function">
    <text evidence="6 8 9 10 11 13 17 18 21">The small GTPases Rab are key regulators of intracellular membrane trafficking, from the formation of transport vesicles to their fusion with membranes. Rabs cycle between an inactive GDP-bound form and an active GTP-bound form that is able to recruit to membranes different set of downstream effectors directly responsible for vesicle formation, movement, tethering and fusion (PubMed:14627637, PubMed:19029296, PubMed:19244346, PubMed:20717956, PubMed:21248079, PubMed:22129970, PubMed:26032412). The small Rab GTPase RAB11B plays a role in endocytic recycling, regulating apical recycling of several transmembrane proteins including cystic fibrosis transmembrane conductance regulator/CFTR, epithelial sodium channel/ENaC, potassium voltage-gated channel, and voltage-dependent L-type calcium channel. May also regulate constitutive and regulated secretion, like insulin granule exocytosis. Required for melanosome transport and release from melanocytes. Also regulates V-ATPase intracellular transport in response to extracellular acidosis (PubMed:14627637, PubMed:19029296, PubMed:19244346, PubMed:20717956, PubMed:21248079, PubMed:22129970). Promotes Rabin8/RAB3IP preciliary vesicular trafficking to mother centriole by forming a ciliary targeting complex containing Rab11, ASAP1, Rabin8/RAB3IP, RAB11FIP3 and ARF4, thereby regulating ciliogenesis initiation (PubMed:25673879). On the contrary, upon LPAR1 receptor signaling pathway activation, interaction with phosphorylated WDR44 prevents Rab11-RAB3IP-RAB11FIP3 complex formation and cilia growth (PubMed:31204173).</text>
</comment>
<comment type="catalytic activity">
    <reaction evidence="27">
        <text>GTP + H2O = GDP + phosphate + H(+)</text>
        <dbReference type="Rhea" id="RHEA:19669"/>
        <dbReference type="ChEBI" id="CHEBI:15377"/>
        <dbReference type="ChEBI" id="CHEBI:15378"/>
        <dbReference type="ChEBI" id="CHEBI:37565"/>
        <dbReference type="ChEBI" id="CHEBI:43474"/>
        <dbReference type="ChEBI" id="CHEBI:58189"/>
        <dbReference type="EC" id="3.6.5.2"/>
    </reaction>
    <physiologicalReaction direction="left-to-right" evidence="27">
        <dbReference type="Rhea" id="RHEA:19670"/>
    </physiologicalReaction>
</comment>
<comment type="cofactor">
    <cofactor evidence="7">
        <name>Mg(2+)</name>
        <dbReference type="ChEBI" id="CHEBI:18420"/>
    </cofactor>
</comment>
<comment type="activity regulation">
    <text evidence="26">Regulated by guanine nucleotide exchange factors (GEFs) which promote the exchange of bound GDP for free GTP (Probable). Regulated by GTPase activating proteins (GAPs) which increase the GTP hydrolysis activity (Probable). Inhibited by GDP dissociation inhibitors (GDIs) which prevent Rab-GDP dissociation (Probable).</text>
</comment>
<comment type="subunit">
    <text evidence="2 5 10 12 14 15 17 20 21">Interacts with KCNMA1 (By similarity). Interacts with RAB11FIP1, RAB11FIP2, RAB11FIP3 and RAB11FIP4 (PubMed:11495908). May interact with TBC1D14 (PubMed:22613832). Interacts with ATP6V1E1 (PubMed:20717956). Interacts with PI4KB (PubMed:23572552). Interacts (GDP-bound form) with ZFYVE27 (PubMed:21976701). Interacts (GDP-bound form) with KIF5A in a ZFYVE27-dependent manner (PubMed:21976701). Interacts with RELCH (By similarity). Interacts (in GTP-bound form) with TBC1D8B (via domain Rab-GAP TBC) (PubMed:30661770). Forms a complex containing RAB11B, ASAP1, Rabin8/RAB3IP, RAP11FIP3 and ARF4 (PubMed:25673879). Interacts with WDR44 (PubMed:31204173).</text>
</comment>
<comment type="interaction">
    <interactant intactId="EBI-722234">
        <id>Q15907</id>
    </interactant>
    <interactant intactId="EBI-852851">
        <id>P01100</id>
        <label>FOS</label>
    </interactant>
    <organismsDiffer>false</organismsDiffer>
    <experiments>3</experiments>
</comment>
<comment type="interaction">
    <interactant intactId="EBI-722234">
        <id>Q15907</id>
    </interactant>
    <interactant intactId="EBI-401755">
        <id>P62993</id>
        <label>GRB2</label>
    </interactant>
    <organismsDiffer>false</organismsDiffer>
    <experiments>3</experiments>
</comment>
<comment type="interaction">
    <interactant intactId="EBI-722234">
        <id>Q15907</id>
    </interactant>
    <interactant intactId="EBI-6980805">
        <id>P42261</id>
        <label>GRIA1</label>
    </interactant>
    <organismsDiffer>false</organismsDiffer>
    <experiments>3</experiments>
</comment>
<comment type="interaction">
    <interactant intactId="EBI-722234">
        <id>Q15907</id>
    </interactant>
    <interactant intactId="EBI-16439278">
        <id>Q6FHY5</id>
        <label>MEOX2</label>
    </interactant>
    <organismsDiffer>false</organismsDiffer>
    <experiments>3</experiments>
</comment>
<comment type="interaction">
    <interactant intactId="EBI-722234">
        <id>Q15907</id>
    </interactant>
    <interactant intactId="EBI-14093244">
        <id>Q9ULV0-2</id>
        <label>MYO5B</label>
    </interactant>
    <organismsDiffer>false</organismsDiffer>
    <experiments>3</experiments>
</comment>
<comment type="interaction">
    <interactant intactId="EBI-722234">
        <id>Q15907</id>
    </interactant>
    <interactant intactId="EBI-1049676">
        <id>Q7L804</id>
        <label>RAB11FIP2</label>
    </interactant>
    <organismsDiffer>false</organismsDiffer>
    <experiments>8</experiments>
</comment>
<comment type="interaction">
    <interactant intactId="EBI-722234">
        <id>Q15907</id>
    </interactant>
    <interactant intactId="EBI-747389">
        <id>Q7L8J4</id>
        <label>SH3BP5L</label>
    </interactant>
    <organismsDiffer>false</organismsDiffer>
    <experiments>7</experiments>
</comment>
<comment type="interaction">
    <interactant intactId="EBI-722234">
        <id>Q15907</id>
    </interactant>
    <interactant intactId="EBI-5235340">
        <id>Q7Z699</id>
        <label>SPRED1</label>
    </interactant>
    <organismsDiffer>false</organismsDiffer>
    <experiments>3</experiments>
</comment>
<comment type="interaction">
    <interactant intactId="EBI-722234">
        <id>Q15907</id>
    </interactant>
    <interactant intactId="EBI-621482">
        <id>P12931</id>
        <label>SRC</label>
    </interactant>
    <organismsDiffer>false</organismsDiffer>
    <experiments>3</experiments>
</comment>
<comment type="interaction">
    <interactant intactId="EBI-722234">
        <id>Q15907</id>
    </interactant>
    <interactant intactId="EBI-2797718">
        <id>Q9P2M4</id>
        <label>TBC1D14</label>
    </interactant>
    <organismsDiffer>false</organismsDiffer>
    <experiments>2</experiments>
</comment>
<comment type="interaction">
    <interactant intactId="EBI-722234">
        <id>Q15907</id>
    </interactant>
    <interactant intactId="EBI-12806590">
        <id>Q86WV8</id>
        <label>TSC1</label>
    </interactant>
    <organismsDiffer>false</organismsDiffer>
    <experiments>3</experiments>
</comment>
<comment type="interaction">
    <interactant intactId="EBI-722234">
        <id>Q15907</id>
    </interactant>
    <interactant intactId="EBI-720609">
        <id>O76024</id>
        <label>WFS1</label>
    </interactant>
    <organismsDiffer>false</organismsDiffer>
    <experiments>3</experiments>
</comment>
<comment type="subcellular location">
    <subcellularLocation>
        <location evidence="2">Recycling endosome membrane</location>
        <topology evidence="2">Lipid-anchor</topology>
        <orientation evidence="2">Cytoplasmic side</orientation>
    </subcellularLocation>
    <subcellularLocation>
        <location evidence="1">Cytoplasmic vesicle</location>
        <location evidence="1">Secretory vesicle</location>
        <location evidence="1">Synaptic vesicle membrane</location>
        <topology evidence="1">Lipid-anchor</topology>
        <orientation evidence="1">Cytoplasmic side</orientation>
    </subcellularLocation>
    <subcellularLocation>
        <location evidence="28">Cytoplasmic vesicle</location>
        <location evidence="28">Phagosome membrane</location>
        <topology evidence="28">Lipid-anchor</topology>
        <orientation evidence="28">Cytoplasmic side</orientation>
    </subcellularLocation>
    <subcellularLocation>
        <location evidence="18">Cytoplasmic vesicle</location>
    </subcellularLocation>
    <text evidence="18 28">Recruited to phagosomes containing S.aureus. Colocalizes with RAB11AFIP1 on punctate vesicles (PubMed:26032412).</text>
</comment>
<comment type="alternative products">
    <event type="alternative splicing"/>
    <isoform>
        <id>Q15907-1</id>
        <name>1</name>
        <sequence type="displayed"/>
    </isoform>
    <isoform>
        <id>Q15907-2</id>
        <name>2</name>
        <sequence type="described" ref="VSP_055832"/>
    </isoform>
</comment>
<comment type="induction">
    <text evidence="10">Up-regulated by extracellular acidosis and down-regulated by alkalosis (at protein level).</text>
</comment>
<comment type="domain">
    <text evidence="7">Switch 1, switch 2 and the interswitch regions are characteristic of Rab GTPases and mediate the interactions with Rab downstream effectors. The switch regions undergo conformational changes upon nucleotide binding which drives interaction with specific sets of effector proteins, with most effectors only binding to GTP-bound Rab.</text>
</comment>
<comment type="PTM">
    <text evidence="2">Citrullinated by PADI4.</text>
</comment>
<comment type="PTM">
    <text evidence="22">(Microbial infection) Glycosylated on arginine residues by S.typhimurium protein Ssek3.</text>
</comment>
<comment type="disease" evidence="19">
    <disease id="DI-05163">
        <name>Neurodevelopmental disorder with ataxic gait, absent speech, and decreased cortical white matter</name>
        <acronym>NDAGSCW</acronym>
        <description>An autosomal dominant neurodevelopmental disorder apparent in infancy and characterized by severe intellectual disability with absent speech, epilepsy, and hypotonia. Additionally, visual problems, musculoskeletal abnormalities, and microcephaly can be present. Brain imaging shows decreased cortical white matter, often with decreased cerebellar white matter, thin corpus callosum, and thin brainstem.</description>
        <dbReference type="MIM" id="617807"/>
    </disease>
    <text>The disease is caused by variants affecting the gene represented in this entry.</text>
</comment>
<comment type="similarity">
    <text evidence="26">Belongs to the small GTPase superfamily. Rab family.</text>
</comment>
<protein>
    <recommendedName>
        <fullName>Ras-related protein Rab-11B</fullName>
        <ecNumber evidence="27">3.6.5.2</ecNumber>
    </recommendedName>
    <alternativeName>
        <fullName evidence="25">GTP-binding protein YPT3</fullName>
    </alternativeName>
</protein>
<sequence length="218" mass="24489">MGTRDDEYDYLFKVVLIGDSGVGKSNLLSRFTRNEFNLESKSTIGVEFATRSIQVDGKTIKAQIWDTAGQERYRAITSAYYRGAVGALLVYDIAKHLTYENVERWLKELRDHADSNIVIMLVGNKSDLRHLRAVPTDEARAFAEKNNLSFIETSALDSTNVEEAFKNILTEIYRIVSQKQIADRAAHDESPGNNVVDISVPPTTDGQKPNKLQCCQNL</sequence>
<proteinExistence type="evidence at protein level"/>
<dbReference type="EC" id="3.6.5.2" evidence="27"/>
<dbReference type="EMBL" id="X79780">
    <property type="protein sequence ID" value="CAA56176.1"/>
    <property type="molecule type" value="mRNA"/>
</dbReference>
<dbReference type="EMBL" id="EF560724">
    <property type="protein sequence ID" value="ABQ59034.1"/>
    <property type="molecule type" value="mRNA"/>
</dbReference>
<dbReference type="EMBL" id="AF498947">
    <property type="protein sequence ID" value="AAM21095.1"/>
    <property type="molecule type" value="mRNA"/>
</dbReference>
<dbReference type="EMBL" id="AK297498">
    <property type="protein sequence ID" value="BAG59912.1"/>
    <property type="molecule type" value="mRNA"/>
</dbReference>
<dbReference type="EMBL" id="AK312994">
    <property type="protein sequence ID" value="BAG35831.1"/>
    <property type="molecule type" value="mRNA"/>
</dbReference>
<dbReference type="EMBL" id="BT019535">
    <property type="protein sequence ID" value="AAV38342.1"/>
    <property type="molecule type" value="mRNA"/>
</dbReference>
<dbReference type="EMBL" id="BT019536">
    <property type="protein sequence ID" value="AAV38343.1"/>
    <property type="molecule type" value="mRNA"/>
</dbReference>
<dbReference type="EMBL" id="CR536494">
    <property type="protein sequence ID" value="CAG38733.1"/>
    <property type="molecule type" value="mRNA"/>
</dbReference>
<dbReference type="EMBL" id="CR541691">
    <property type="protein sequence ID" value="CAG46492.1"/>
    <property type="molecule type" value="mRNA"/>
</dbReference>
<dbReference type="EMBL" id="AC136469">
    <property type="status" value="NOT_ANNOTATED_CDS"/>
    <property type="molecule type" value="Genomic_DNA"/>
</dbReference>
<dbReference type="EMBL" id="CH471139">
    <property type="protein sequence ID" value="EAW68927.1"/>
    <property type="molecule type" value="Genomic_DNA"/>
</dbReference>
<dbReference type="EMBL" id="BC110081">
    <property type="protein sequence ID" value="AAI10082.1"/>
    <property type="molecule type" value="mRNA"/>
</dbReference>
<dbReference type="CCDS" id="CCDS12201.1">
    <molecule id="Q15907-1"/>
</dbReference>
<dbReference type="PIR" id="JC2487">
    <property type="entry name" value="JC2487"/>
</dbReference>
<dbReference type="RefSeq" id="NP_004209.2">
    <molecule id="Q15907-1"/>
    <property type="nucleotide sequence ID" value="NM_004218.4"/>
</dbReference>
<dbReference type="PDB" id="2F9L">
    <property type="method" value="X-ray"/>
    <property type="resolution" value="1.55 A"/>
    <property type="chains" value="A=8-205"/>
</dbReference>
<dbReference type="PDB" id="2F9M">
    <property type="method" value="X-ray"/>
    <property type="resolution" value="1.95 A"/>
    <property type="chains" value="A=8-205"/>
</dbReference>
<dbReference type="PDB" id="4OJK">
    <property type="method" value="X-ray"/>
    <property type="resolution" value="2.66 A"/>
    <property type="chains" value="A/B=8-205"/>
</dbReference>
<dbReference type="PDBsum" id="2F9L"/>
<dbReference type="PDBsum" id="2F9M"/>
<dbReference type="PDBsum" id="4OJK"/>
<dbReference type="SMR" id="Q15907"/>
<dbReference type="BioGRID" id="114661">
    <property type="interactions" value="166"/>
</dbReference>
<dbReference type="CORUM" id="Q15907"/>
<dbReference type="DIP" id="DIP-50898N"/>
<dbReference type="FunCoup" id="Q15907">
    <property type="interactions" value="3354"/>
</dbReference>
<dbReference type="IntAct" id="Q15907">
    <property type="interactions" value="112"/>
</dbReference>
<dbReference type="MINT" id="Q15907"/>
<dbReference type="STRING" id="9606.ENSP00000333547"/>
<dbReference type="GlyGen" id="Q15907">
    <property type="glycosylation" value="1 site, 1 O-linked glycan (1 site)"/>
</dbReference>
<dbReference type="iPTMnet" id="Q15907"/>
<dbReference type="PhosphoSitePlus" id="Q15907"/>
<dbReference type="SwissPalm" id="Q15907"/>
<dbReference type="BioMuta" id="RAB11B"/>
<dbReference type="DMDM" id="38258938"/>
<dbReference type="jPOST" id="Q15907"/>
<dbReference type="MassIVE" id="Q15907"/>
<dbReference type="PaxDb" id="9606-ENSP00000333547"/>
<dbReference type="PeptideAtlas" id="Q15907"/>
<dbReference type="ProteomicsDB" id="60808">
    <molecule id="Q15907-1"/>
</dbReference>
<dbReference type="Pumba" id="Q15907"/>
<dbReference type="TopDownProteomics" id="Q15907-1">
    <molecule id="Q15907-1"/>
</dbReference>
<dbReference type="Antibodypedia" id="24871">
    <property type="antibodies" value="185 antibodies from 30 providers"/>
</dbReference>
<dbReference type="DNASU" id="9230"/>
<dbReference type="Ensembl" id="ENST00000328024.11">
    <molecule id="Q15907-1"/>
    <property type="protein sequence ID" value="ENSP00000333547.5"/>
    <property type="gene ID" value="ENSG00000185236.12"/>
</dbReference>
<dbReference type="Ensembl" id="ENST00000594216.1">
    <molecule id="Q15907-2"/>
    <property type="protein sequence ID" value="ENSP00000471148.1"/>
    <property type="gene ID" value="ENSG00000185236.12"/>
</dbReference>
<dbReference type="GeneID" id="9230"/>
<dbReference type="KEGG" id="hsa:9230"/>
<dbReference type="MANE-Select" id="ENST00000328024.11">
    <property type="protein sequence ID" value="ENSP00000333547.5"/>
    <property type="RefSeq nucleotide sequence ID" value="NM_004218.4"/>
    <property type="RefSeq protein sequence ID" value="NP_004209.2"/>
</dbReference>
<dbReference type="UCSC" id="uc002mju.5">
    <molecule id="Q15907-1"/>
    <property type="organism name" value="human"/>
</dbReference>
<dbReference type="AGR" id="HGNC:9761"/>
<dbReference type="CTD" id="9230"/>
<dbReference type="DisGeNET" id="9230"/>
<dbReference type="GeneCards" id="RAB11B"/>
<dbReference type="HGNC" id="HGNC:9761">
    <property type="gene designation" value="RAB11B"/>
</dbReference>
<dbReference type="HPA" id="ENSG00000185236">
    <property type="expression patterns" value="Low tissue specificity"/>
</dbReference>
<dbReference type="MalaCards" id="RAB11B"/>
<dbReference type="MIM" id="604198">
    <property type="type" value="gene"/>
</dbReference>
<dbReference type="MIM" id="617807">
    <property type="type" value="phenotype"/>
</dbReference>
<dbReference type="neXtProt" id="NX_Q15907"/>
<dbReference type="OpenTargets" id="ENSG00000185236"/>
<dbReference type="PharmGKB" id="PA34102"/>
<dbReference type="VEuPathDB" id="HostDB:ENSG00000185236"/>
<dbReference type="eggNOG" id="KOG0087">
    <property type="taxonomic scope" value="Eukaryota"/>
</dbReference>
<dbReference type="GeneTree" id="ENSGT00940000161659"/>
<dbReference type="HOGENOM" id="CLU_041217_23_0_1"/>
<dbReference type="InParanoid" id="Q15907"/>
<dbReference type="OMA" id="FAENHTM"/>
<dbReference type="OrthoDB" id="9989112at2759"/>
<dbReference type="PAN-GO" id="Q15907">
    <property type="GO annotations" value="6 GO annotations based on evolutionary models"/>
</dbReference>
<dbReference type="PhylomeDB" id="Q15907"/>
<dbReference type="TreeFam" id="TF300099"/>
<dbReference type="PathwayCommons" id="Q15907"/>
<dbReference type="Reactome" id="R-HSA-8854214">
    <property type="pathway name" value="TBC/RABGAPs"/>
</dbReference>
<dbReference type="Reactome" id="R-HSA-8873719">
    <property type="pathway name" value="RAB geranylgeranylation"/>
</dbReference>
<dbReference type="SignaLink" id="Q15907"/>
<dbReference type="BioGRID-ORCS" id="9230">
    <property type="hits" value="7 hits in 1162 CRISPR screens"/>
</dbReference>
<dbReference type="CD-CODE" id="91857CE7">
    <property type="entry name" value="Nucleolus"/>
</dbReference>
<dbReference type="CD-CODE" id="FB4E32DD">
    <property type="entry name" value="Presynaptic clusters and postsynaptic densities"/>
</dbReference>
<dbReference type="ChiTaRS" id="RAB11B">
    <property type="organism name" value="human"/>
</dbReference>
<dbReference type="EvolutionaryTrace" id="Q15907"/>
<dbReference type="GeneWiki" id="RAB11B"/>
<dbReference type="GenomeRNAi" id="9230"/>
<dbReference type="Pharos" id="Q15907">
    <property type="development level" value="Tbio"/>
</dbReference>
<dbReference type="PRO" id="PR:Q15907"/>
<dbReference type="Proteomes" id="UP000005640">
    <property type="component" value="Chromosome 19"/>
</dbReference>
<dbReference type="RNAct" id="Q15907">
    <property type="molecule type" value="protein"/>
</dbReference>
<dbReference type="Bgee" id="ENSG00000185236">
    <property type="expression patterns" value="Expressed in right lobe of thyroid gland and 146 other cell types or tissues"/>
</dbReference>
<dbReference type="ExpressionAtlas" id="Q15907">
    <property type="expression patterns" value="baseline and differential"/>
</dbReference>
<dbReference type="GO" id="GO:0005829">
    <property type="term" value="C:cytosol"/>
    <property type="evidence" value="ECO:0000304"/>
    <property type="project" value="Reactome"/>
</dbReference>
<dbReference type="GO" id="GO:0070062">
    <property type="term" value="C:extracellular exosome"/>
    <property type="evidence" value="ECO:0007005"/>
    <property type="project" value="UniProtKB"/>
</dbReference>
<dbReference type="GO" id="GO:0005794">
    <property type="term" value="C:Golgi apparatus"/>
    <property type="evidence" value="ECO:0000318"/>
    <property type="project" value="GO_Central"/>
</dbReference>
<dbReference type="GO" id="GO:0045335">
    <property type="term" value="C:phagocytic vesicle"/>
    <property type="evidence" value="ECO:0000314"/>
    <property type="project" value="UniProtKB"/>
</dbReference>
<dbReference type="GO" id="GO:0030670">
    <property type="term" value="C:phagocytic vesicle membrane"/>
    <property type="evidence" value="ECO:0007669"/>
    <property type="project" value="UniProtKB-SubCell"/>
</dbReference>
<dbReference type="GO" id="GO:0055037">
    <property type="term" value="C:recycling endosome"/>
    <property type="evidence" value="ECO:0000250"/>
    <property type="project" value="UniProtKB"/>
</dbReference>
<dbReference type="GO" id="GO:0055038">
    <property type="term" value="C:recycling endosome membrane"/>
    <property type="evidence" value="ECO:0000304"/>
    <property type="project" value="Reactome"/>
</dbReference>
<dbReference type="GO" id="GO:0008021">
    <property type="term" value="C:synaptic vesicle"/>
    <property type="evidence" value="ECO:0000250"/>
    <property type="project" value="UniProtKB"/>
</dbReference>
<dbReference type="GO" id="GO:0030672">
    <property type="term" value="C:synaptic vesicle membrane"/>
    <property type="evidence" value="ECO:0007669"/>
    <property type="project" value="UniProtKB-SubCell"/>
</dbReference>
<dbReference type="GO" id="GO:0045296">
    <property type="term" value="F:cadherin binding"/>
    <property type="evidence" value="ECO:0007005"/>
    <property type="project" value="BHF-UCL"/>
</dbReference>
<dbReference type="GO" id="GO:0003925">
    <property type="term" value="F:G protein activity"/>
    <property type="evidence" value="ECO:0007669"/>
    <property type="project" value="UniProtKB-EC"/>
</dbReference>
<dbReference type="GO" id="GO:0019003">
    <property type="term" value="F:GDP binding"/>
    <property type="evidence" value="ECO:0000314"/>
    <property type="project" value="UniProtKB"/>
</dbReference>
<dbReference type="GO" id="GO:0005525">
    <property type="term" value="F:GTP binding"/>
    <property type="evidence" value="ECO:0000314"/>
    <property type="project" value="UniProtKB"/>
</dbReference>
<dbReference type="GO" id="GO:0003924">
    <property type="term" value="F:GTPase activity"/>
    <property type="evidence" value="ECO:0000314"/>
    <property type="project" value="UniProtKB"/>
</dbReference>
<dbReference type="GO" id="GO:0031489">
    <property type="term" value="F:myosin V binding"/>
    <property type="evidence" value="ECO:0000353"/>
    <property type="project" value="UniProtKB"/>
</dbReference>
<dbReference type="GO" id="GO:0150093">
    <property type="term" value="P:amyloid-beta clearance by transcytosis"/>
    <property type="evidence" value="ECO:0000316"/>
    <property type="project" value="ARUK-UCL"/>
</dbReference>
<dbReference type="GO" id="GO:0071468">
    <property type="term" value="P:cellular response to acidic pH"/>
    <property type="evidence" value="ECO:0000314"/>
    <property type="project" value="UniProtKB"/>
</dbReference>
<dbReference type="GO" id="GO:0045054">
    <property type="term" value="P:constitutive secretory pathway"/>
    <property type="evidence" value="ECO:0000315"/>
    <property type="project" value="UniProtKB"/>
</dbReference>
<dbReference type="GO" id="GO:0032456">
    <property type="term" value="P:endocytic recycling"/>
    <property type="evidence" value="ECO:0000315"/>
    <property type="project" value="UniProtKB"/>
</dbReference>
<dbReference type="GO" id="GO:0090150">
    <property type="term" value="P:establishment of protein localization to membrane"/>
    <property type="evidence" value="ECO:0000315"/>
    <property type="project" value="UniProtKB"/>
</dbReference>
<dbReference type="GO" id="GO:0035773">
    <property type="term" value="P:insulin secretion involved in cellular response to glucose stimulus"/>
    <property type="evidence" value="ECO:0000250"/>
    <property type="project" value="UniProtKB"/>
</dbReference>
<dbReference type="GO" id="GO:0032402">
    <property type="term" value="P:melanosome transport"/>
    <property type="evidence" value="ECO:0000250"/>
    <property type="project" value="UniProtKB"/>
</dbReference>
<dbReference type="GO" id="GO:0001881">
    <property type="term" value="P:receptor recycling"/>
    <property type="evidence" value="ECO:0000250"/>
    <property type="project" value="UniProtKB"/>
</dbReference>
<dbReference type="GO" id="GO:0045055">
    <property type="term" value="P:regulated exocytosis"/>
    <property type="evidence" value="ECO:0000250"/>
    <property type="project" value="UniProtKB"/>
</dbReference>
<dbReference type="GO" id="GO:2001135">
    <property type="term" value="P:regulation of endocytic recycling"/>
    <property type="evidence" value="ECO:0000250"/>
    <property type="project" value="UniProtKB"/>
</dbReference>
<dbReference type="GO" id="GO:0044070">
    <property type="term" value="P:regulation of monoatomic anion transport"/>
    <property type="evidence" value="ECO:0000315"/>
    <property type="project" value="UniProtKB"/>
</dbReference>
<dbReference type="GO" id="GO:2000008">
    <property type="term" value="P:regulation of protein localization to cell surface"/>
    <property type="evidence" value="ECO:0000315"/>
    <property type="project" value="UniProtKB"/>
</dbReference>
<dbReference type="GO" id="GO:0033572">
    <property type="term" value="P:transferrin transport"/>
    <property type="evidence" value="ECO:0000250"/>
    <property type="project" value="UniProtKB"/>
</dbReference>
<dbReference type="CDD" id="cd01868">
    <property type="entry name" value="Rab11_like"/>
    <property type="match status" value="1"/>
</dbReference>
<dbReference type="FunFam" id="3.40.50.300:FF:000085">
    <property type="entry name" value="Putative ras-related protein rab-11a"/>
    <property type="match status" value="1"/>
</dbReference>
<dbReference type="Gene3D" id="3.40.50.300">
    <property type="entry name" value="P-loop containing nucleotide triphosphate hydrolases"/>
    <property type="match status" value="1"/>
</dbReference>
<dbReference type="InterPro" id="IPR027417">
    <property type="entry name" value="P-loop_NTPase"/>
</dbReference>
<dbReference type="InterPro" id="IPR050209">
    <property type="entry name" value="Rab_GTPases_membrane_traffic"/>
</dbReference>
<dbReference type="InterPro" id="IPR005225">
    <property type="entry name" value="Small_GTP-bd"/>
</dbReference>
<dbReference type="InterPro" id="IPR001806">
    <property type="entry name" value="Small_GTPase"/>
</dbReference>
<dbReference type="NCBIfam" id="TIGR00231">
    <property type="entry name" value="small_GTP"/>
    <property type="match status" value="1"/>
</dbReference>
<dbReference type="PANTHER" id="PTHR47979">
    <property type="entry name" value="DRAB11-RELATED"/>
    <property type="match status" value="1"/>
</dbReference>
<dbReference type="Pfam" id="PF00071">
    <property type="entry name" value="Ras"/>
    <property type="match status" value="1"/>
</dbReference>
<dbReference type="PRINTS" id="PR00449">
    <property type="entry name" value="RASTRNSFRMNG"/>
</dbReference>
<dbReference type="SMART" id="SM00175">
    <property type="entry name" value="RAB"/>
    <property type="match status" value="1"/>
</dbReference>
<dbReference type="SMART" id="SM00176">
    <property type="entry name" value="RAN"/>
    <property type="match status" value="1"/>
</dbReference>
<dbReference type="SMART" id="SM00173">
    <property type="entry name" value="RAS"/>
    <property type="match status" value="1"/>
</dbReference>
<dbReference type="SMART" id="SM00174">
    <property type="entry name" value="RHO"/>
    <property type="match status" value="1"/>
</dbReference>
<dbReference type="SUPFAM" id="SSF52540">
    <property type="entry name" value="P-loop containing nucleoside triphosphate hydrolases"/>
    <property type="match status" value="1"/>
</dbReference>
<dbReference type="PROSITE" id="PS51419">
    <property type="entry name" value="RAB"/>
    <property type="match status" value="1"/>
</dbReference>
<name>RB11B_HUMAN</name>
<accession>Q15907</accession>
<accession>A5YM50</accession>
<accession>B2R7I4</accession>
<accession>B4DMK0</accession>
<accession>D6W671</accession>
<accession>Q2YDT2</accession>
<accession>Q5U0I1</accession>
<accession>Q6FHR0</accession>
<accession>Q6FI42</accession>
<accession>Q8NI07</accession>
<evidence type="ECO:0000250" key="1">
    <source>
        <dbReference type="UniProtKB" id="O35509"/>
    </source>
</evidence>
<evidence type="ECO:0000250" key="2">
    <source>
        <dbReference type="UniProtKB" id="P46638"/>
    </source>
</evidence>
<evidence type="ECO:0000250" key="3">
    <source>
        <dbReference type="UniProtKB" id="P51157"/>
    </source>
</evidence>
<evidence type="ECO:0000256" key="4">
    <source>
        <dbReference type="SAM" id="MobiDB-lite"/>
    </source>
</evidence>
<evidence type="ECO:0000269" key="5">
    <source>
    </source>
</evidence>
<evidence type="ECO:0000269" key="6">
    <source>
    </source>
</evidence>
<evidence type="ECO:0000269" key="7">
    <source>
    </source>
</evidence>
<evidence type="ECO:0000269" key="8">
    <source>
    </source>
</evidence>
<evidence type="ECO:0000269" key="9">
    <source>
    </source>
</evidence>
<evidence type="ECO:0000269" key="10">
    <source>
    </source>
</evidence>
<evidence type="ECO:0000269" key="11">
    <source>
    </source>
</evidence>
<evidence type="ECO:0000269" key="12">
    <source>
    </source>
</evidence>
<evidence type="ECO:0000269" key="13">
    <source>
    </source>
</evidence>
<evidence type="ECO:0000269" key="14">
    <source>
    </source>
</evidence>
<evidence type="ECO:0000269" key="15">
    <source>
    </source>
</evidence>
<evidence type="ECO:0000269" key="16">
    <source>
    </source>
</evidence>
<evidence type="ECO:0000269" key="17">
    <source>
    </source>
</evidence>
<evidence type="ECO:0000269" key="18">
    <source>
    </source>
</evidence>
<evidence type="ECO:0000269" key="19">
    <source>
    </source>
</evidence>
<evidence type="ECO:0000269" key="20">
    <source>
    </source>
</evidence>
<evidence type="ECO:0000269" key="21">
    <source>
    </source>
</evidence>
<evidence type="ECO:0000269" key="22">
    <source>
    </source>
</evidence>
<evidence type="ECO:0000269" key="23">
    <source ref="10"/>
</evidence>
<evidence type="ECO:0000303" key="24">
    <source>
    </source>
</evidence>
<evidence type="ECO:0000303" key="25">
    <source>
    </source>
</evidence>
<evidence type="ECO:0000305" key="26"/>
<evidence type="ECO:0000305" key="27">
    <source>
    </source>
</evidence>
<evidence type="ECO:0000305" key="28">
    <source>
    </source>
</evidence>
<evidence type="ECO:0000312" key="29">
    <source>
        <dbReference type="HGNC" id="HGNC:9761"/>
    </source>
</evidence>
<evidence type="ECO:0007744" key="30">
    <source>
        <dbReference type="PDB" id="2F9L"/>
    </source>
</evidence>
<evidence type="ECO:0007744" key="31">
    <source>
        <dbReference type="PDB" id="2F9M"/>
    </source>
</evidence>
<evidence type="ECO:0007829" key="32">
    <source>
        <dbReference type="PDB" id="2F9L"/>
    </source>
</evidence>
<evidence type="ECO:0007829" key="33">
    <source>
        <dbReference type="PDB" id="4OJK"/>
    </source>
</evidence>
<organism>
    <name type="scientific">Homo sapiens</name>
    <name type="common">Human</name>
    <dbReference type="NCBI Taxonomy" id="9606"/>
    <lineage>
        <taxon>Eukaryota</taxon>
        <taxon>Metazoa</taxon>
        <taxon>Chordata</taxon>
        <taxon>Craniata</taxon>
        <taxon>Vertebrata</taxon>
        <taxon>Euteleostomi</taxon>
        <taxon>Mammalia</taxon>
        <taxon>Eutheria</taxon>
        <taxon>Euarchontoglires</taxon>
        <taxon>Primates</taxon>
        <taxon>Haplorrhini</taxon>
        <taxon>Catarrhini</taxon>
        <taxon>Hominidae</taxon>
        <taxon>Homo</taxon>
    </lineage>
</organism>